<gene>
    <name evidence="1" type="primary">nqrA</name>
    <name type="ordered locus">PA14_25280</name>
</gene>
<accession>Q02PG3</accession>
<feature type="chain" id="PRO_1000060123" description="Na(+)-translocating NADH-quinone reductase subunit A">
    <location>
        <begin position="1"/>
        <end position="445"/>
    </location>
</feature>
<dbReference type="EC" id="7.2.1.1" evidence="1"/>
<dbReference type="EMBL" id="CP000438">
    <property type="protein sequence ID" value="ABJ12237.1"/>
    <property type="molecule type" value="Genomic_DNA"/>
</dbReference>
<dbReference type="RefSeq" id="WP_003109479.1">
    <property type="nucleotide sequence ID" value="NZ_CP034244.1"/>
</dbReference>
<dbReference type="SMR" id="Q02PG3"/>
<dbReference type="KEGG" id="pau:PA14_25280"/>
<dbReference type="PseudoCAP" id="PA14_25280"/>
<dbReference type="HOGENOM" id="CLU_046656_0_0_6"/>
<dbReference type="BioCyc" id="PAER208963:G1G74-2108-MONOMER"/>
<dbReference type="Proteomes" id="UP000000653">
    <property type="component" value="Chromosome"/>
</dbReference>
<dbReference type="GO" id="GO:0016655">
    <property type="term" value="F:oxidoreductase activity, acting on NAD(P)H, quinone or similar compound as acceptor"/>
    <property type="evidence" value="ECO:0007669"/>
    <property type="project" value="UniProtKB-UniRule"/>
</dbReference>
<dbReference type="GO" id="GO:0006814">
    <property type="term" value="P:sodium ion transport"/>
    <property type="evidence" value="ECO:0007669"/>
    <property type="project" value="UniProtKB-UniRule"/>
</dbReference>
<dbReference type="HAMAP" id="MF_00425">
    <property type="entry name" value="NqrA"/>
    <property type="match status" value="1"/>
</dbReference>
<dbReference type="InterPro" id="IPR008703">
    <property type="entry name" value="NqrA"/>
</dbReference>
<dbReference type="InterPro" id="IPR056148">
    <property type="entry name" value="NQRA_2nd"/>
</dbReference>
<dbReference type="InterPro" id="IPR022615">
    <property type="entry name" value="NqrA_C_domain"/>
</dbReference>
<dbReference type="InterPro" id="IPR056147">
    <property type="entry name" value="NQRA_N"/>
</dbReference>
<dbReference type="NCBIfam" id="TIGR01936">
    <property type="entry name" value="nqrA"/>
    <property type="match status" value="1"/>
</dbReference>
<dbReference type="NCBIfam" id="NF003759">
    <property type="entry name" value="PRK05352.1-2"/>
    <property type="match status" value="1"/>
</dbReference>
<dbReference type="PANTHER" id="PTHR37839">
    <property type="entry name" value="NA(+)-TRANSLOCATING NADH-QUINONE REDUCTASE SUBUNIT A"/>
    <property type="match status" value="1"/>
</dbReference>
<dbReference type="PANTHER" id="PTHR37839:SF1">
    <property type="entry name" value="NA(+)-TRANSLOCATING NADH-QUINONE REDUCTASE SUBUNIT A"/>
    <property type="match status" value="1"/>
</dbReference>
<dbReference type="Pfam" id="PF24836">
    <property type="entry name" value="NQRA_2nd"/>
    <property type="match status" value="1"/>
</dbReference>
<dbReference type="Pfam" id="PF05896">
    <property type="entry name" value="NQRA_N"/>
    <property type="match status" value="1"/>
</dbReference>
<dbReference type="Pfam" id="PF11973">
    <property type="entry name" value="NQRA_SLBB"/>
    <property type="match status" value="1"/>
</dbReference>
<sequence>MIKIKRGLDLPISGAPEQRIEAARPVRSVALIGFDYHGMKPTMAVQVGDRVKLGQALFTDKKNPSVSYTAPGAGVVSAIHRGEKRVLQSVVIDLDGDEQLEFARYPADQLATLSAEQVRDNLLQSGLWTALRTRPFSKVPDPESSPSSIFVTAIDTQPLAADPQVVIAEQGEAFQAGLTVLGRLARVFLCKAEGVSLPGEALSGVTAQAFAGPHPAGLPGTHIHFLDPVGAGKSVWNLNYQDVIAIGKLFTTGQLWTERVIALAGPVVEKPRLVRTRLGANLDELAAGQLQPGNNRLISGSVLGGRTAHGAYAYLGRYHLQLSCLKEGDQREFLHYLRAGVEKHSLLNVFVSRLLGGKRFAFTTSTNGSPRAMVPVGNYEAVMPLDILPTQLLRYLIVGDTEMAQKLGALELDEEDLALCSYVCAGKYEYGPILRDNLARIEQEG</sequence>
<comment type="function">
    <text evidence="1">NQR complex catalyzes the reduction of ubiquinone-1 to ubiquinol by two successive reactions, coupled with the transport of Na(+) ions from the cytoplasm to the periplasm. NqrA to NqrE are probably involved in the second step, the conversion of ubisemiquinone to ubiquinol.</text>
</comment>
<comment type="catalytic activity">
    <reaction evidence="1">
        <text>a ubiquinone + n Na(+)(in) + NADH + H(+) = a ubiquinol + n Na(+)(out) + NAD(+)</text>
        <dbReference type="Rhea" id="RHEA:47748"/>
        <dbReference type="Rhea" id="RHEA-COMP:9565"/>
        <dbReference type="Rhea" id="RHEA-COMP:9566"/>
        <dbReference type="ChEBI" id="CHEBI:15378"/>
        <dbReference type="ChEBI" id="CHEBI:16389"/>
        <dbReference type="ChEBI" id="CHEBI:17976"/>
        <dbReference type="ChEBI" id="CHEBI:29101"/>
        <dbReference type="ChEBI" id="CHEBI:57540"/>
        <dbReference type="ChEBI" id="CHEBI:57945"/>
        <dbReference type="EC" id="7.2.1.1"/>
    </reaction>
</comment>
<comment type="subunit">
    <text evidence="1">Composed of six subunits; NqrA, NqrB, NqrC, NqrD, NqrE and NqrF.</text>
</comment>
<comment type="similarity">
    <text evidence="1">Belongs to the NqrA family.</text>
</comment>
<name>NQRA_PSEAB</name>
<evidence type="ECO:0000255" key="1">
    <source>
        <dbReference type="HAMAP-Rule" id="MF_00425"/>
    </source>
</evidence>
<protein>
    <recommendedName>
        <fullName evidence="1">Na(+)-translocating NADH-quinone reductase subunit A</fullName>
        <shortName evidence="1">Na(+)-NQR subunit A</shortName>
        <shortName evidence="1">Na(+)-translocating NQR subunit A</shortName>
        <ecNumber evidence="1">7.2.1.1</ecNumber>
    </recommendedName>
    <alternativeName>
        <fullName evidence="1">NQR complex subunit A</fullName>
    </alternativeName>
    <alternativeName>
        <fullName evidence="1">NQR-1 subunit A</fullName>
    </alternativeName>
</protein>
<keyword id="KW-0406">Ion transport</keyword>
<keyword id="KW-0520">NAD</keyword>
<keyword id="KW-0915">Sodium</keyword>
<keyword id="KW-0739">Sodium transport</keyword>
<keyword id="KW-1278">Translocase</keyword>
<keyword id="KW-0813">Transport</keyword>
<keyword id="KW-0830">Ubiquinone</keyword>
<reference key="1">
    <citation type="journal article" date="2006" name="Genome Biol.">
        <title>Genomic analysis reveals that Pseudomonas aeruginosa virulence is combinatorial.</title>
        <authorList>
            <person name="Lee D.G."/>
            <person name="Urbach J.M."/>
            <person name="Wu G."/>
            <person name="Liberati N.T."/>
            <person name="Feinbaum R.L."/>
            <person name="Miyata S."/>
            <person name="Diggins L.T."/>
            <person name="He J."/>
            <person name="Saucier M."/>
            <person name="Deziel E."/>
            <person name="Friedman L."/>
            <person name="Li L."/>
            <person name="Grills G."/>
            <person name="Montgomery K."/>
            <person name="Kucherlapati R."/>
            <person name="Rahme L.G."/>
            <person name="Ausubel F.M."/>
        </authorList>
    </citation>
    <scope>NUCLEOTIDE SEQUENCE [LARGE SCALE GENOMIC DNA]</scope>
    <source>
        <strain>UCBPP-PA14</strain>
    </source>
</reference>
<organism>
    <name type="scientific">Pseudomonas aeruginosa (strain UCBPP-PA14)</name>
    <dbReference type="NCBI Taxonomy" id="208963"/>
    <lineage>
        <taxon>Bacteria</taxon>
        <taxon>Pseudomonadati</taxon>
        <taxon>Pseudomonadota</taxon>
        <taxon>Gammaproteobacteria</taxon>
        <taxon>Pseudomonadales</taxon>
        <taxon>Pseudomonadaceae</taxon>
        <taxon>Pseudomonas</taxon>
    </lineage>
</organism>
<proteinExistence type="inferred from homology"/>